<feature type="chain" id="PRO_0000439586" description="Alpha-galactosidase Mel36A">
    <location>
        <begin position="1"/>
        <end position="732"/>
    </location>
</feature>
<feature type="active site" description="Nucleophile" evidence="7">
    <location>
        <position position="482"/>
    </location>
</feature>
<feature type="active site" description="Proton donor" evidence="7">
    <location>
        <position position="552"/>
    </location>
</feature>
<feature type="binding site" evidence="2 13">
    <location>
        <begin position="370"/>
        <end position="371"/>
    </location>
    <ligand>
        <name>substrate</name>
    </ligand>
</feature>
<feature type="binding site" evidence="2 13">
    <location>
        <position position="415"/>
    </location>
    <ligand>
        <name>substrate</name>
    </ligand>
</feature>
<feature type="binding site" evidence="2 13">
    <location>
        <position position="447"/>
    </location>
    <ligand>
        <name>substrate</name>
    </ligand>
</feature>
<feature type="binding site" evidence="2 13">
    <location>
        <begin position="480"/>
        <end position="484"/>
    </location>
    <ligand>
        <name>substrate</name>
    </ligand>
</feature>
<feature type="binding site" evidence="2 13">
    <location>
        <begin position="530"/>
        <end position="533"/>
    </location>
    <ligand>
        <name>substrate</name>
    </ligand>
</feature>
<feature type="binding site" evidence="2 13">
    <location>
        <position position="552"/>
    </location>
    <ligand>
        <name>substrate</name>
    </ligand>
</feature>
<feature type="strand" evidence="14">
    <location>
        <begin position="6"/>
        <end position="9"/>
    </location>
</feature>
<feature type="turn" evidence="14">
    <location>
        <begin position="10"/>
        <end position="13"/>
    </location>
</feature>
<feature type="strand" evidence="14">
    <location>
        <begin position="14"/>
        <end position="18"/>
    </location>
</feature>
<feature type="strand" evidence="14">
    <location>
        <begin position="20"/>
        <end position="29"/>
    </location>
</feature>
<feature type="helix" evidence="14">
    <location>
        <begin position="30"/>
        <end position="32"/>
    </location>
</feature>
<feature type="strand" evidence="14">
    <location>
        <begin position="33"/>
        <end position="41"/>
    </location>
</feature>
<feature type="turn" evidence="14">
    <location>
        <begin position="73"/>
        <end position="75"/>
    </location>
</feature>
<feature type="strand" evidence="14">
    <location>
        <begin position="92"/>
        <end position="96"/>
    </location>
</feature>
<feature type="strand" evidence="14">
    <location>
        <begin position="107"/>
        <end position="116"/>
    </location>
</feature>
<feature type="helix" evidence="14">
    <location>
        <begin position="131"/>
        <end position="133"/>
    </location>
</feature>
<feature type="strand" evidence="14">
    <location>
        <begin position="134"/>
        <end position="143"/>
    </location>
</feature>
<feature type="turn" evidence="14">
    <location>
        <begin position="144"/>
        <end position="147"/>
    </location>
</feature>
<feature type="strand" evidence="14">
    <location>
        <begin position="148"/>
        <end position="157"/>
    </location>
</feature>
<feature type="strand" evidence="14">
    <location>
        <begin position="160"/>
        <end position="171"/>
    </location>
</feature>
<feature type="strand" evidence="14">
    <location>
        <begin position="173"/>
        <end position="175"/>
    </location>
</feature>
<feature type="strand" evidence="14">
    <location>
        <begin position="177"/>
        <end position="191"/>
    </location>
</feature>
<feature type="strand" evidence="14">
    <location>
        <begin position="195"/>
        <end position="198"/>
    </location>
</feature>
<feature type="strand" evidence="14">
    <location>
        <begin position="210"/>
        <end position="213"/>
    </location>
</feature>
<feature type="strand" evidence="14">
    <location>
        <begin position="216"/>
        <end position="222"/>
    </location>
</feature>
<feature type="strand" evidence="14">
    <location>
        <begin position="225"/>
        <end position="228"/>
    </location>
</feature>
<feature type="strand" evidence="14">
    <location>
        <begin position="230"/>
        <end position="232"/>
    </location>
</feature>
<feature type="strand" evidence="14">
    <location>
        <begin position="234"/>
        <end position="239"/>
    </location>
</feature>
<feature type="strand" evidence="14">
    <location>
        <begin position="245"/>
        <end position="248"/>
    </location>
</feature>
<feature type="strand" evidence="14">
    <location>
        <begin position="250"/>
        <end position="255"/>
    </location>
</feature>
<feature type="strand" evidence="14">
    <location>
        <begin position="261"/>
        <end position="267"/>
    </location>
</feature>
<feature type="strand" evidence="14">
    <location>
        <begin position="273"/>
        <end position="279"/>
    </location>
</feature>
<feature type="strand" evidence="14">
    <location>
        <begin position="286"/>
        <end position="288"/>
    </location>
</feature>
<feature type="strand" evidence="14">
    <location>
        <begin position="293"/>
        <end position="295"/>
    </location>
</feature>
<feature type="strand" evidence="14">
    <location>
        <begin position="299"/>
        <end position="306"/>
    </location>
</feature>
<feature type="helix" evidence="14">
    <location>
        <begin position="308"/>
        <end position="322"/>
    </location>
</feature>
<feature type="turn" evidence="14">
    <location>
        <begin position="327"/>
        <end position="330"/>
    </location>
</feature>
<feature type="strand" evidence="14">
    <location>
        <begin position="336"/>
        <end position="338"/>
    </location>
</feature>
<feature type="helix" evidence="14">
    <location>
        <begin position="340"/>
        <end position="343"/>
    </location>
</feature>
<feature type="helix" evidence="14">
    <location>
        <begin position="349"/>
        <end position="361"/>
    </location>
</feature>
<feature type="strand" evidence="14">
    <location>
        <begin position="366"/>
        <end position="369"/>
    </location>
</feature>
<feature type="strand" evidence="14">
    <location>
        <begin position="371"/>
        <end position="374"/>
    </location>
</feature>
<feature type="turn" evidence="14">
    <location>
        <begin position="391"/>
        <end position="393"/>
    </location>
</feature>
<feature type="helix" evidence="14">
    <location>
        <begin position="398"/>
        <end position="407"/>
    </location>
</feature>
<feature type="strand" evidence="14">
    <location>
        <begin position="411"/>
        <end position="416"/>
    </location>
</feature>
<feature type="strand" evidence="14">
    <location>
        <begin position="423"/>
        <end position="425"/>
    </location>
</feature>
<feature type="helix" evidence="14">
    <location>
        <begin position="426"/>
        <end position="430"/>
    </location>
</feature>
<feature type="helix" evidence="14">
    <location>
        <begin position="432"/>
        <end position="434"/>
    </location>
</feature>
<feature type="strand" evidence="14">
    <location>
        <begin position="449"/>
        <end position="452"/>
    </location>
</feature>
<feature type="helix" evidence="14">
    <location>
        <begin position="457"/>
        <end position="471"/>
    </location>
</feature>
<feature type="strand" evidence="14">
    <location>
        <begin position="478"/>
        <end position="481"/>
    </location>
</feature>
<feature type="helix" evidence="14">
    <location>
        <begin position="497"/>
        <end position="502"/>
    </location>
</feature>
<feature type="helix" evidence="14">
    <location>
        <begin position="503"/>
        <end position="521"/>
    </location>
</feature>
<feature type="strand" evidence="14">
    <location>
        <begin position="525"/>
        <end position="529"/>
    </location>
</feature>
<feature type="helix" evidence="14">
    <location>
        <begin position="539"/>
        <end position="542"/>
    </location>
</feature>
<feature type="strand" evidence="14">
    <location>
        <begin position="546"/>
        <end position="549"/>
    </location>
</feature>
<feature type="helix" evidence="14">
    <location>
        <begin position="556"/>
        <end position="566"/>
    </location>
</feature>
<feature type="turn" evidence="14">
    <location>
        <begin position="567"/>
        <end position="569"/>
    </location>
</feature>
<feature type="helix" evidence="14">
    <location>
        <begin position="572"/>
        <end position="574"/>
    </location>
</feature>
<feature type="strand" evidence="14">
    <location>
        <begin position="575"/>
        <end position="580"/>
    </location>
</feature>
<feature type="turn" evidence="14">
    <location>
        <begin position="585"/>
        <end position="587"/>
    </location>
</feature>
<feature type="helix" evidence="14">
    <location>
        <begin position="593"/>
        <end position="600"/>
    </location>
</feature>
<feature type="strand" evidence="14">
    <location>
        <begin position="603"/>
        <end position="609"/>
    </location>
</feature>
<feature type="helix" evidence="14">
    <location>
        <begin position="611"/>
        <end position="613"/>
    </location>
</feature>
<feature type="helix" evidence="14">
    <location>
        <begin position="616"/>
        <end position="638"/>
    </location>
</feature>
<feature type="strand" evidence="14">
    <location>
        <begin position="639"/>
        <end position="645"/>
    </location>
</feature>
<feature type="helix" evidence="14">
    <location>
        <begin position="647"/>
        <end position="649"/>
    </location>
</feature>
<feature type="strand" evidence="14">
    <location>
        <begin position="651"/>
        <end position="657"/>
    </location>
</feature>
<feature type="strand" evidence="14">
    <location>
        <begin position="663"/>
        <end position="670"/>
    </location>
</feature>
<feature type="strand" evidence="14">
    <location>
        <begin position="691"/>
        <end position="695"/>
    </location>
</feature>
<feature type="turn" evidence="14">
    <location>
        <begin position="696"/>
        <end position="698"/>
    </location>
</feature>
<feature type="strand" evidence="14">
    <location>
        <begin position="701"/>
        <end position="703"/>
    </location>
</feature>
<feature type="helix" evidence="14">
    <location>
        <begin position="704"/>
        <end position="709"/>
    </location>
</feature>
<feature type="strand" evidence="14">
    <location>
        <begin position="718"/>
        <end position="730"/>
    </location>
</feature>
<keyword id="KW-0002">3D-structure</keyword>
<keyword id="KW-0119">Carbohydrate metabolism</keyword>
<keyword id="KW-0326">Glycosidase</keyword>
<keyword id="KW-0378">Hydrolase</keyword>
<keyword id="KW-1185">Reference proteome</keyword>
<organism evidence="10">
    <name type="scientific">Lactobacillus acidophilus (strain ATCC 700396 / NCK56 / N2 / NCFM)</name>
    <dbReference type="NCBI Taxonomy" id="272621"/>
    <lineage>
        <taxon>Bacteria</taxon>
        <taxon>Bacillati</taxon>
        <taxon>Bacillota</taxon>
        <taxon>Bacilli</taxon>
        <taxon>Lactobacillales</taxon>
        <taxon>Lactobacillaceae</taxon>
        <taxon>Lactobacillus</taxon>
    </lineage>
</organism>
<evidence type="ECO:0000269" key="1">
    <source>
    </source>
</evidence>
<evidence type="ECO:0000269" key="2">
    <source>
    </source>
</evidence>
<evidence type="ECO:0000303" key="3">
    <source>
    </source>
</evidence>
<evidence type="ECO:0000303" key="4">
    <source>
    </source>
</evidence>
<evidence type="ECO:0000303" key="5">
    <source>
    </source>
</evidence>
<evidence type="ECO:0000305" key="6"/>
<evidence type="ECO:0000305" key="7">
    <source>
    </source>
</evidence>
<evidence type="ECO:0000312" key="8">
    <source>
        <dbReference type="EMBL" id="AAO21867.1"/>
    </source>
</evidence>
<evidence type="ECO:0000312" key="9">
    <source>
        <dbReference type="EMBL" id="AAV43263.1"/>
    </source>
</evidence>
<evidence type="ECO:0000312" key="10">
    <source>
        <dbReference type="Proteomes" id="UP000006381"/>
    </source>
</evidence>
<evidence type="ECO:0007744" key="11">
    <source>
        <dbReference type="PDB" id="2XN0"/>
    </source>
</evidence>
<evidence type="ECO:0007744" key="12">
    <source>
        <dbReference type="PDB" id="2XN1"/>
    </source>
</evidence>
<evidence type="ECO:0007744" key="13">
    <source>
        <dbReference type="PDB" id="2XN2"/>
    </source>
</evidence>
<evidence type="ECO:0007829" key="14">
    <source>
        <dbReference type="PDB" id="2XN2"/>
    </source>
</evidence>
<dbReference type="EC" id="3.2.1.22" evidence="2 8 9"/>
<dbReference type="EMBL" id="AY172020">
    <property type="protein sequence ID" value="AAO21867.1"/>
    <property type="molecule type" value="Genomic_DNA"/>
</dbReference>
<dbReference type="EMBL" id="CP000033">
    <property type="protein sequence ID" value="AAV43263.1"/>
    <property type="molecule type" value="Genomic_DNA"/>
</dbReference>
<dbReference type="RefSeq" id="WP_003548136.1">
    <property type="nucleotide sequence ID" value="NC_006814.3"/>
</dbReference>
<dbReference type="RefSeq" id="YP_194294.1">
    <property type="nucleotide sequence ID" value="NC_006814.3"/>
</dbReference>
<dbReference type="PDB" id="2XN0">
    <property type="method" value="X-ray"/>
    <property type="resolution" value="2.50 A"/>
    <property type="chains" value="A/B=1-732"/>
</dbReference>
<dbReference type="PDB" id="2XN1">
    <property type="method" value="X-ray"/>
    <property type="resolution" value="2.30 A"/>
    <property type="chains" value="A/B/C/D=1-732"/>
</dbReference>
<dbReference type="PDB" id="2XN2">
    <property type="method" value="X-ray"/>
    <property type="resolution" value="1.58 A"/>
    <property type="chains" value="A=1-732"/>
</dbReference>
<dbReference type="PDBsum" id="2XN0"/>
<dbReference type="PDBsum" id="2XN1"/>
<dbReference type="PDBsum" id="2XN2"/>
<dbReference type="SMR" id="G1UB44"/>
<dbReference type="STRING" id="272621.LBA1438"/>
<dbReference type="CAZy" id="GH36">
    <property type="family name" value="Glycoside Hydrolase Family 36"/>
</dbReference>
<dbReference type="KEGG" id="lac:LBA1438"/>
<dbReference type="PATRIC" id="fig|272621.13.peg.1364"/>
<dbReference type="eggNOG" id="COG3345">
    <property type="taxonomic scope" value="Bacteria"/>
</dbReference>
<dbReference type="HOGENOM" id="CLU_009640_2_1_9"/>
<dbReference type="OrthoDB" id="9758822at2"/>
<dbReference type="BioCyc" id="LACI272621:G1G49-1412-MONOMER"/>
<dbReference type="BRENDA" id="3.2.1.22">
    <property type="organism ID" value="2846"/>
</dbReference>
<dbReference type="EvolutionaryTrace" id="G1UB44"/>
<dbReference type="Proteomes" id="UP000006381">
    <property type="component" value="Chromosome"/>
</dbReference>
<dbReference type="GO" id="GO:0004557">
    <property type="term" value="F:alpha-galactosidase activity"/>
    <property type="evidence" value="ECO:0000314"/>
    <property type="project" value="UniProtKB"/>
</dbReference>
<dbReference type="GO" id="GO:0016052">
    <property type="term" value="P:carbohydrate catabolic process"/>
    <property type="evidence" value="ECO:0000314"/>
    <property type="project" value="UniProtKB"/>
</dbReference>
<dbReference type="GO" id="GO:0051289">
    <property type="term" value="P:protein homotetramerization"/>
    <property type="evidence" value="ECO:0000314"/>
    <property type="project" value="UniProtKB"/>
</dbReference>
<dbReference type="GO" id="GO:1901545">
    <property type="term" value="P:response to raffinose"/>
    <property type="evidence" value="ECO:0000270"/>
    <property type="project" value="UniProtKB"/>
</dbReference>
<dbReference type="CDD" id="cd14791">
    <property type="entry name" value="GH36"/>
    <property type="match status" value="1"/>
</dbReference>
<dbReference type="FunFam" id="3.20.20.70:FF:000118">
    <property type="entry name" value="Alpha-galactosidase"/>
    <property type="match status" value="1"/>
</dbReference>
<dbReference type="Gene3D" id="3.20.20.70">
    <property type="entry name" value="Aldolase class I"/>
    <property type="match status" value="1"/>
</dbReference>
<dbReference type="Gene3D" id="2.70.98.60">
    <property type="entry name" value="alpha-galactosidase from lactobacil brevis"/>
    <property type="match status" value="1"/>
</dbReference>
<dbReference type="Gene3D" id="2.60.40.1180">
    <property type="entry name" value="Golgi alpha-mannosidase II"/>
    <property type="match status" value="1"/>
</dbReference>
<dbReference type="InterPro" id="IPR013785">
    <property type="entry name" value="Aldolase_TIM"/>
</dbReference>
<dbReference type="InterPro" id="IPR038417">
    <property type="entry name" value="Alpga-gal_N_sf"/>
</dbReference>
<dbReference type="InterPro" id="IPR050985">
    <property type="entry name" value="Alpha-glycosidase_related"/>
</dbReference>
<dbReference type="InterPro" id="IPR000111">
    <property type="entry name" value="Glyco_hydro_27/36_CS"/>
</dbReference>
<dbReference type="InterPro" id="IPR002252">
    <property type="entry name" value="Glyco_hydro_36"/>
</dbReference>
<dbReference type="InterPro" id="IPR031705">
    <property type="entry name" value="Glyco_hydro_36_C"/>
</dbReference>
<dbReference type="InterPro" id="IPR031704">
    <property type="entry name" value="Glyco_hydro_36_N"/>
</dbReference>
<dbReference type="InterPro" id="IPR013780">
    <property type="entry name" value="Glyco_hydro_b"/>
</dbReference>
<dbReference type="InterPro" id="IPR017853">
    <property type="entry name" value="Glycoside_hydrolase_SF"/>
</dbReference>
<dbReference type="PANTHER" id="PTHR43053:SF3">
    <property type="entry name" value="ALPHA-GALACTOSIDASE C-RELATED"/>
    <property type="match status" value="1"/>
</dbReference>
<dbReference type="PANTHER" id="PTHR43053">
    <property type="entry name" value="GLYCOSIDASE FAMILY 31"/>
    <property type="match status" value="1"/>
</dbReference>
<dbReference type="Pfam" id="PF16874">
    <property type="entry name" value="Glyco_hydro_36C"/>
    <property type="match status" value="1"/>
</dbReference>
<dbReference type="Pfam" id="PF16875">
    <property type="entry name" value="Glyco_hydro_36N"/>
    <property type="match status" value="1"/>
</dbReference>
<dbReference type="Pfam" id="PF02065">
    <property type="entry name" value="Melibiase"/>
    <property type="match status" value="1"/>
</dbReference>
<dbReference type="PIRSF" id="PIRSF005536">
    <property type="entry name" value="Agal"/>
    <property type="match status" value="1"/>
</dbReference>
<dbReference type="PRINTS" id="PR00743">
    <property type="entry name" value="GLHYDRLASE36"/>
</dbReference>
<dbReference type="SUPFAM" id="SSF51445">
    <property type="entry name" value="(Trans)glycosidases"/>
    <property type="match status" value="1"/>
</dbReference>
<dbReference type="PROSITE" id="PS00512">
    <property type="entry name" value="ALPHA_GALACTOSIDASE"/>
    <property type="match status" value="1"/>
</dbReference>
<proteinExistence type="evidence at protein level"/>
<reference evidence="8" key="1">
    <citation type="journal article" date="2003" name="Proc. Natl. Acad. Sci. U.S.A.">
        <title>Functional and comparative genomic analyses of an operon involved in fructooligosaccharide utilization by Lactobacillus acidophilus.</title>
        <authorList>
            <person name="Barrangou R."/>
            <person name="Altermann E."/>
            <person name="Hutkins R."/>
            <person name="Cano R."/>
            <person name="Klaenhammer T.R."/>
        </authorList>
    </citation>
    <scope>NUCLEOTIDE SEQUENCE [GENOMIC DNA]</scope>
    <source>
        <strain evidence="3">ATCC 700396 / NCK56 / N2 / NCFM</strain>
    </source>
</reference>
<reference evidence="9 10" key="2">
    <citation type="journal article" date="2005" name="Proc. Natl. Acad. Sci. U.S.A.">
        <title>Complete genome sequence of the probiotic lactic acid bacterium Lactobacillus acidophilus NCFM.</title>
        <authorList>
            <person name="Altermann E."/>
            <person name="Russell W.M."/>
            <person name="Azcarate-Peril M.A."/>
            <person name="Barrangou R."/>
            <person name="Buck B.L."/>
            <person name="McAuliffe O."/>
            <person name="Souther N."/>
            <person name="Dobson A."/>
            <person name="Duong T."/>
            <person name="Callanan M."/>
            <person name="Lick S."/>
            <person name="Hamrick A."/>
            <person name="Cano R."/>
            <person name="Klaenhammer T.R."/>
        </authorList>
    </citation>
    <scope>NUCLEOTIDE SEQUENCE [LARGE SCALE GENOMIC DNA]</scope>
    <source>
        <strain evidence="10">ATCC 700396 / NCK56 / N2 / NCFM</strain>
    </source>
</reference>
<reference key="3">
    <citation type="journal article" date="2006" name="Proc. Natl. Acad. Sci. U.S.A.">
        <title>Global analysis of carbohydrate utilization by Lactobacillus acidophilus using cDNA microarrays.</title>
        <authorList>
            <person name="Barrangou R."/>
            <person name="Azcarate-Peril M.A."/>
            <person name="Duong T."/>
            <person name="Conners S.B."/>
            <person name="Kelly R.M."/>
            <person name="Klaenhammer T.R."/>
        </authorList>
    </citation>
    <scope>INDUCTION BY RAFFINOSE</scope>
</reference>
<reference evidence="11 12 13" key="4">
    <citation type="journal article" date="2011" name="J. Mol. Biol.">
        <title>Crystal structure of alpha-galactosidase from Lactobacillus acidophilus NCFM: insight into tetramer formation and substrate binding.</title>
        <authorList>
            <person name="Fredslund F."/>
            <person name="Hachem M.A."/>
            <person name="Larsen R.J."/>
            <person name="Sorensen P.G."/>
            <person name="Coutinho P.M."/>
            <person name="Lo Leggio L."/>
            <person name="Svensson B."/>
        </authorList>
    </citation>
    <scope>X-RAY CRYSTALLOGRAPHY (1.58 ANGSTROMS) OF SUBSTRATE-FREE ENZYME AND IN COMPLEX WITH ALPHA-GALACTOSE</scope>
    <scope>CATALYTIC ACTIVITY</scope>
    <scope>SUBUNIT</scope>
    <scope>ACTIVE SITE</scope>
    <scope>PHYLOGENETIC ANALYSIS</scope>
</reference>
<protein>
    <recommendedName>
        <fullName evidence="5">Alpha-galactosidase Mel36A</fullName>
        <shortName evidence="5">LaMel36A</shortName>
        <ecNumber evidence="2 8 9">3.2.1.22</ecNumber>
    </recommendedName>
</protein>
<gene>
    <name evidence="4 9" type="primary">melA</name>
    <name evidence="8" type="synonym">aga</name>
    <name evidence="9" type="ordered locus">LBA1438</name>
</gene>
<comment type="function">
    <text evidence="6">Hydrolyzes the short-chain alpha-galactosaccharide raffinose.</text>
</comment>
<comment type="catalytic activity">
    <reaction evidence="2">
        <text>Hydrolysis of terminal, non-reducing alpha-D-galactose residues in alpha-D-galactosides, including galactose oligosaccharides, galactomannans and galactolipids.</text>
        <dbReference type="EC" id="3.2.1.22"/>
    </reaction>
</comment>
<comment type="subunit">
    <text evidence="2">Homotetramer.</text>
</comment>
<comment type="induction">
    <text evidence="1">By raffinose.</text>
</comment>
<comment type="similarity">
    <text evidence="6">Belongs to the glycosyl hydrolase 36 family.</text>
</comment>
<name>MELA_LACAC</name>
<sequence length="732" mass="84478">MTSNLIKFDDQNKVFHLHNKQISYLLSIEDGGTLSHLYFGGAVKNYNNQLKYPRLDRGFSGNLPESLDRTFSRDSLPKEYSSAGEMDFHTPATIVRNPDGSNALFLAYKSYKIEDGKPDLKGLPHSWTKEDDEAQTLIVTLEDKVSKLEYDLLYTIYRDRPVIVRSVQVHNHGEEAVYLEKVASMQMDYVDKDFEVITLPGAHANERRVQRENIGQGIKVFSSYRGTSSHQMNPFMALVDHDTNEFMGEAYGFALAYSGNHKFEVERDQFGQIHVNTGINDYNFKWKLNPNEEFQTPEVLMVYSDQGLNKMSQAFHSLIHERIMRSKFKDQIRPVLVNNWEATYFDFNEDKLKTIVDKAKKLGLEMFVLDDGWFGHRDDDNSSLGDWKVYKKKFPNGLGHFADYVHEQGLKFGLWFEPEMISYESNLYKEHPDYLMHVPGRKPCPSRNQYVLELGRKEVRDNIFEQMVKILDSKKIDYIKWDMNRSLSDIYESDLPADQQGEAYHRYVLGYYDLLNKLVTRYPDILFEGCSGGGGRFDVGQAYYTPQIWASDNTDAIERLKIQYGTSLVYPQSMMTSHVSVSPNEQNGRITPFNTRGAVAMWGDLGYELDLTKMSDEESDQVVKQVTEYKKIREVTQFGTLYRLKASASNQCAWMMVDSNKNEAVVTVVNVMAHAQPYCTKTKLAGLDPDKRYKNLETDEVFGGDELMHLGFYDPIERGDFKAKMYHFKAIN</sequence>
<accession>G1UB44</accession>
<accession>F1SVF4</accession>
<accession>Q5FJ61</accession>
<accession>Q7WWP9</accession>